<comment type="function">
    <text evidence="1">Induces mouse splenocyte proliferation and guinea pig smooth muscle contraction through binding to CCK-BR.</text>
</comment>
<comment type="subcellular location">
    <subcellularLocation>
        <location evidence="1">Secreted</location>
    </subcellularLocation>
</comment>
<comment type="tissue specificity">
    <text evidence="1">Expressed by the skin glands.</text>
</comment>
<accession>P86123</accession>
<evidence type="ECO:0000269" key="1">
    <source>
    </source>
</evidence>
<evidence type="ECO:0000303" key="2">
    <source>
    </source>
</evidence>
<evidence type="ECO:0000305" key="3"/>
<feature type="peptide" id="PRO_0000371738" description="Signiferin-1" evidence="1">
    <location>
        <begin position="1"/>
        <end position="10"/>
    </location>
</feature>
<feature type="disulfide bond" evidence="1">
    <location>
        <begin position="3"/>
        <end position="10"/>
    </location>
</feature>
<protein>
    <recommendedName>
        <fullName evidence="2">Signiferin-1</fullName>
    </recommendedName>
</protein>
<dbReference type="GO" id="GO:0005576">
    <property type="term" value="C:extracellular region"/>
    <property type="evidence" value="ECO:0000314"/>
    <property type="project" value="UniProtKB"/>
</dbReference>
<dbReference type="GO" id="GO:0008083">
    <property type="term" value="F:growth factor activity"/>
    <property type="evidence" value="ECO:0007669"/>
    <property type="project" value="UniProtKB-KW"/>
</dbReference>
<dbReference type="GO" id="GO:0006952">
    <property type="term" value="P:defense response"/>
    <property type="evidence" value="ECO:0007669"/>
    <property type="project" value="UniProtKB-KW"/>
</dbReference>
<dbReference type="GO" id="GO:0070665">
    <property type="term" value="P:positive regulation of leukocyte proliferation"/>
    <property type="evidence" value="ECO:0000314"/>
    <property type="project" value="UniProtKB"/>
</dbReference>
<dbReference type="GO" id="GO:0045987">
    <property type="term" value="P:positive regulation of smooth muscle contraction"/>
    <property type="evidence" value="ECO:0000314"/>
    <property type="project" value="UniProtKB"/>
</dbReference>
<dbReference type="GO" id="GO:0042311">
    <property type="term" value="P:vasodilation"/>
    <property type="evidence" value="ECO:0007669"/>
    <property type="project" value="UniProtKB-KW"/>
</dbReference>
<keyword id="KW-0878">Amphibian defense peptide</keyword>
<keyword id="KW-0903">Direct protein sequencing</keyword>
<keyword id="KW-1015">Disulfide bond</keyword>
<keyword id="KW-0339">Growth factor</keyword>
<keyword id="KW-0964">Secreted</keyword>
<keyword id="KW-0838">Vasoactive</keyword>
<keyword id="KW-0840">Vasodilator</keyword>
<reference evidence="3" key="1">
    <citation type="journal article" date="2008" name="Regul. Pept.">
        <title>Disulfide-containing peptides from the glandular skin secretions of froglets of the genus Crinia: structure, activity and evolutionary trends.</title>
        <authorList>
            <person name="Jackway R.J."/>
            <person name="Pukala T.L."/>
            <person name="Maselli V.M."/>
            <person name="Musgrave I.F."/>
            <person name="Bowie J.H."/>
            <person name="Liu Y."/>
            <person name="Surinya-Johnson K.H."/>
            <person name="Donnellan S.C."/>
            <person name="Doyle J.R."/>
            <person name="Llewellyn L.E."/>
            <person name="Tyler M.J."/>
        </authorList>
    </citation>
    <scope>PROTEIN SEQUENCE</scope>
    <scope>FUNCTION</scope>
    <scope>SUBCELLULAR LOCATION</scope>
    <scope>TISSUE SPECIFICITY</scope>
    <scope>DISULFIDE BOND</scope>
    <scope>DISCUSSION OF SEQUENCE</scope>
    <source>
        <tissue evidence="1">Skin secretion</tissue>
    </source>
</reference>
<organism>
    <name type="scientific">Crinia deserticola</name>
    <name type="common">Desert froglet</name>
    <dbReference type="NCBI Taxonomy" id="104060"/>
    <lineage>
        <taxon>Eukaryota</taxon>
        <taxon>Metazoa</taxon>
        <taxon>Chordata</taxon>
        <taxon>Craniata</taxon>
        <taxon>Vertebrata</taxon>
        <taxon>Euteleostomi</taxon>
        <taxon>Amphibia</taxon>
        <taxon>Batrachia</taxon>
        <taxon>Anura</taxon>
        <taxon>Neobatrachia</taxon>
        <taxon>Myobatrachoidea</taxon>
        <taxon>Myobatrachidae</taxon>
        <taxon>Myobatrachinae</taxon>
        <taxon>Crinia</taxon>
    </lineage>
</organism>
<name>SIG1_CRIDS</name>
<proteinExistence type="evidence at protein level"/>
<sequence>RLCIPYIIPC</sequence>